<gene>
    <name type="ordered locus">At4g08028</name>
    <name type="ORF">F1K3</name>
</gene>
<accession>Q2V3L0</accession>
<name>DF102_ARATH</name>
<keyword id="KW-0929">Antimicrobial</keyword>
<keyword id="KW-1015">Disulfide bond</keyword>
<keyword id="KW-0295">Fungicide</keyword>
<keyword id="KW-0611">Plant defense</keyword>
<keyword id="KW-1185">Reference proteome</keyword>
<keyword id="KW-0964">Secreted</keyword>
<keyword id="KW-0732">Signal</keyword>
<protein>
    <recommendedName>
        <fullName>Putative defensin-like protein 102</fullName>
    </recommendedName>
</protein>
<evidence type="ECO:0000250" key="1"/>
<evidence type="ECO:0000255" key="2"/>
<evidence type="ECO:0000305" key="3"/>
<reference key="1">
    <citation type="journal article" date="1999" name="Nature">
        <title>Sequence and analysis of chromosome 4 of the plant Arabidopsis thaliana.</title>
        <authorList>
            <person name="Mayer K.F.X."/>
            <person name="Schueller C."/>
            <person name="Wambutt R."/>
            <person name="Murphy G."/>
            <person name="Volckaert G."/>
            <person name="Pohl T."/>
            <person name="Duesterhoeft A."/>
            <person name="Stiekema W."/>
            <person name="Entian K.-D."/>
            <person name="Terryn N."/>
            <person name="Harris B."/>
            <person name="Ansorge W."/>
            <person name="Brandt P."/>
            <person name="Grivell L.A."/>
            <person name="Rieger M."/>
            <person name="Weichselgartner M."/>
            <person name="de Simone V."/>
            <person name="Obermaier B."/>
            <person name="Mache R."/>
            <person name="Mueller M."/>
            <person name="Kreis M."/>
            <person name="Delseny M."/>
            <person name="Puigdomenech P."/>
            <person name="Watson M."/>
            <person name="Schmidtheini T."/>
            <person name="Reichert B."/>
            <person name="Portetelle D."/>
            <person name="Perez-Alonso M."/>
            <person name="Boutry M."/>
            <person name="Bancroft I."/>
            <person name="Vos P."/>
            <person name="Hoheisel J."/>
            <person name="Zimmermann W."/>
            <person name="Wedler H."/>
            <person name="Ridley P."/>
            <person name="Langham S.-A."/>
            <person name="McCullagh B."/>
            <person name="Bilham L."/>
            <person name="Robben J."/>
            <person name="van der Schueren J."/>
            <person name="Grymonprez B."/>
            <person name="Chuang Y.-J."/>
            <person name="Vandenbussche F."/>
            <person name="Braeken M."/>
            <person name="Weltjens I."/>
            <person name="Voet M."/>
            <person name="Bastiaens I."/>
            <person name="Aert R."/>
            <person name="Defoor E."/>
            <person name="Weitzenegger T."/>
            <person name="Bothe G."/>
            <person name="Ramsperger U."/>
            <person name="Hilbert H."/>
            <person name="Braun M."/>
            <person name="Holzer E."/>
            <person name="Brandt A."/>
            <person name="Peters S."/>
            <person name="van Staveren M."/>
            <person name="Dirkse W."/>
            <person name="Mooijman P."/>
            <person name="Klein Lankhorst R."/>
            <person name="Rose M."/>
            <person name="Hauf J."/>
            <person name="Koetter P."/>
            <person name="Berneiser S."/>
            <person name="Hempel S."/>
            <person name="Feldpausch M."/>
            <person name="Lamberth S."/>
            <person name="Van den Daele H."/>
            <person name="De Keyser A."/>
            <person name="Buysshaert C."/>
            <person name="Gielen J."/>
            <person name="Villarroel R."/>
            <person name="De Clercq R."/>
            <person name="van Montagu M."/>
            <person name="Rogers J."/>
            <person name="Cronin A."/>
            <person name="Quail M.A."/>
            <person name="Bray-Allen S."/>
            <person name="Clark L."/>
            <person name="Doggett J."/>
            <person name="Hall S."/>
            <person name="Kay M."/>
            <person name="Lennard N."/>
            <person name="McLay K."/>
            <person name="Mayes R."/>
            <person name="Pettett A."/>
            <person name="Rajandream M.A."/>
            <person name="Lyne M."/>
            <person name="Benes V."/>
            <person name="Rechmann S."/>
            <person name="Borkova D."/>
            <person name="Bloecker H."/>
            <person name="Scharfe M."/>
            <person name="Grimm M."/>
            <person name="Loehnert T.-H."/>
            <person name="Dose S."/>
            <person name="de Haan M."/>
            <person name="Maarse A.C."/>
            <person name="Schaefer M."/>
            <person name="Mueller-Auer S."/>
            <person name="Gabel C."/>
            <person name="Fuchs M."/>
            <person name="Fartmann B."/>
            <person name="Granderath K."/>
            <person name="Dauner D."/>
            <person name="Herzl A."/>
            <person name="Neumann S."/>
            <person name="Argiriou A."/>
            <person name="Vitale D."/>
            <person name="Liguori R."/>
            <person name="Piravandi E."/>
            <person name="Massenet O."/>
            <person name="Quigley F."/>
            <person name="Clabauld G."/>
            <person name="Muendlein A."/>
            <person name="Felber R."/>
            <person name="Schnabl S."/>
            <person name="Hiller R."/>
            <person name="Schmidt W."/>
            <person name="Lecharny A."/>
            <person name="Aubourg S."/>
            <person name="Chefdor F."/>
            <person name="Cooke R."/>
            <person name="Berger C."/>
            <person name="Monfort A."/>
            <person name="Casacuberta E."/>
            <person name="Gibbons T."/>
            <person name="Weber N."/>
            <person name="Vandenbol M."/>
            <person name="Bargues M."/>
            <person name="Terol J."/>
            <person name="Torres A."/>
            <person name="Perez-Perez A."/>
            <person name="Purnelle B."/>
            <person name="Bent E."/>
            <person name="Johnson S."/>
            <person name="Tacon D."/>
            <person name="Jesse T."/>
            <person name="Heijnen L."/>
            <person name="Schwarz S."/>
            <person name="Scholler P."/>
            <person name="Heber S."/>
            <person name="Francs P."/>
            <person name="Bielke C."/>
            <person name="Frishman D."/>
            <person name="Haase D."/>
            <person name="Lemcke K."/>
            <person name="Mewes H.-W."/>
            <person name="Stocker S."/>
            <person name="Zaccaria P."/>
            <person name="Bevan M."/>
            <person name="Wilson R.K."/>
            <person name="de la Bastide M."/>
            <person name="Habermann K."/>
            <person name="Parnell L."/>
            <person name="Dedhia N."/>
            <person name="Gnoj L."/>
            <person name="Schutz K."/>
            <person name="Huang E."/>
            <person name="Spiegel L."/>
            <person name="Sekhon M."/>
            <person name="Murray J."/>
            <person name="Sheet P."/>
            <person name="Cordes M."/>
            <person name="Abu-Threideh J."/>
            <person name="Stoneking T."/>
            <person name="Kalicki J."/>
            <person name="Graves T."/>
            <person name="Harmon G."/>
            <person name="Edwards J."/>
            <person name="Latreille P."/>
            <person name="Courtney L."/>
            <person name="Cloud J."/>
            <person name="Abbott A."/>
            <person name="Scott K."/>
            <person name="Johnson D."/>
            <person name="Minx P."/>
            <person name="Bentley D."/>
            <person name="Fulton B."/>
            <person name="Miller N."/>
            <person name="Greco T."/>
            <person name="Kemp K."/>
            <person name="Kramer J."/>
            <person name="Fulton L."/>
            <person name="Mardis E."/>
            <person name="Dante M."/>
            <person name="Pepin K."/>
            <person name="Hillier L.W."/>
            <person name="Nelson J."/>
            <person name="Spieth J."/>
            <person name="Ryan E."/>
            <person name="Andrews S."/>
            <person name="Geisel C."/>
            <person name="Layman D."/>
            <person name="Du H."/>
            <person name="Ali J."/>
            <person name="Berghoff A."/>
            <person name="Jones K."/>
            <person name="Drone K."/>
            <person name="Cotton M."/>
            <person name="Joshu C."/>
            <person name="Antonoiu B."/>
            <person name="Zidanic M."/>
            <person name="Strong C."/>
            <person name="Sun H."/>
            <person name="Lamar B."/>
            <person name="Yordan C."/>
            <person name="Ma P."/>
            <person name="Zhong J."/>
            <person name="Preston R."/>
            <person name="Vil D."/>
            <person name="Shekher M."/>
            <person name="Matero A."/>
            <person name="Shah R."/>
            <person name="Swaby I.K."/>
            <person name="O'Shaughnessy A."/>
            <person name="Rodriguez M."/>
            <person name="Hoffman J."/>
            <person name="Till S."/>
            <person name="Granat S."/>
            <person name="Shohdy N."/>
            <person name="Hasegawa A."/>
            <person name="Hameed A."/>
            <person name="Lodhi M."/>
            <person name="Johnson A."/>
            <person name="Chen E."/>
            <person name="Marra M.A."/>
            <person name="Martienssen R."/>
            <person name="McCombie W.R."/>
        </authorList>
    </citation>
    <scope>NUCLEOTIDE SEQUENCE [LARGE SCALE GENOMIC DNA]</scope>
    <source>
        <strain>cv. Columbia</strain>
    </source>
</reference>
<reference key="2">
    <citation type="journal article" date="2017" name="Plant J.">
        <title>Araport11: a complete reannotation of the Arabidopsis thaliana reference genome.</title>
        <authorList>
            <person name="Cheng C.Y."/>
            <person name="Krishnakumar V."/>
            <person name="Chan A.P."/>
            <person name="Thibaud-Nissen F."/>
            <person name="Schobel S."/>
            <person name="Town C.D."/>
        </authorList>
    </citation>
    <scope>GENOME REANNOTATION</scope>
    <source>
        <strain>cv. Columbia</strain>
    </source>
</reference>
<reference key="3">
    <citation type="journal article" date="2005" name="Plant Physiol.">
        <title>Genome organization of more than 300 defensin-like genes in Arabidopsis.</title>
        <authorList>
            <person name="Silverstein K.A.T."/>
            <person name="Graham M.A."/>
            <person name="Paape T.D."/>
            <person name="VandenBosch K.A."/>
        </authorList>
    </citation>
    <scope>GENE FAMILY</scope>
</reference>
<comment type="subcellular location">
    <subcellularLocation>
        <location evidence="1">Secreted</location>
    </subcellularLocation>
</comment>
<comment type="similarity">
    <text evidence="3">Belongs to the DEFL family.</text>
</comment>
<organism>
    <name type="scientific">Arabidopsis thaliana</name>
    <name type="common">Mouse-ear cress</name>
    <dbReference type="NCBI Taxonomy" id="3702"/>
    <lineage>
        <taxon>Eukaryota</taxon>
        <taxon>Viridiplantae</taxon>
        <taxon>Streptophyta</taxon>
        <taxon>Embryophyta</taxon>
        <taxon>Tracheophyta</taxon>
        <taxon>Spermatophyta</taxon>
        <taxon>Magnoliopsida</taxon>
        <taxon>eudicotyledons</taxon>
        <taxon>Gunneridae</taxon>
        <taxon>Pentapetalae</taxon>
        <taxon>rosids</taxon>
        <taxon>malvids</taxon>
        <taxon>Brassicales</taxon>
        <taxon>Brassicaceae</taxon>
        <taxon>Camelineae</taxon>
        <taxon>Arabidopsis</taxon>
    </lineage>
</organism>
<feature type="signal peptide" evidence="2">
    <location>
        <begin position="1"/>
        <end position="24"/>
    </location>
</feature>
<feature type="chain" id="PRO_0000379665" description="Putative defensin-like protein 102">
    <location>
        <begin position="25"/>
        <end position="81"/>
    </location>
</feature>
<feature type="disulfide bond" evidence="1">
    <location>
        <begin position="43"/>
        <end position="78"/>
    </location>
</feature>
<feature type="disulfide bond" evidence="1">
    <location>
        <begin position="49"/>
        <end position="71"/>
    </location>
</feature>
<feature type="disulfide bond" evidence="1">
    <location>
        <begin position="57"/>
        <end position="76"/>
    </location>
</feature>
<feature type="disulfide bond" evidence="1">
    <location>
        <begin position="61"/>
        <end position="77"/>
    </location>
</feature>
<sequence>MTTTMKTFVAFVLTVFFIMSSAHCRTTTGGSPGYGIGGRTKTCFTPALCIYRGVHGCDSYCKTKNFDYGYCRQEHCCCVNY</sequence>
<proteinExistence type="inferred from homology"/>
<dbReference type="EMBL" id="AC006266">
    <property type="status" value="NOT_ANNOTATED_CDS"/>
    <property type="molecule type" value="Genomic_DNA"/>
</dbReference>
<dbReference type="EMBL" id="AL161508">
    <property type="status" value="NOT_ANNOTATED_CDS"/>
    <property type="molecule type" value="Genomic_DNA"/>
</dbReference>
<dbReference type="EMBL" id="CP002687">
    <property type="protein sequence ID" value="AEE82591.1"/>
    <property type="molecule type" value="Genomic_DNA"/>
</dbReference>
<dbReference type="RefSeq" id="NP_001031591.1">
    <property type="nucleotide sequence ID" value="NM_001036514.2"/>
</dbReference>
<dbReference type="SMR" id="Q2V3L0"/>
<dbReference type="PaxDb" id="3702-AT4G08028.1"/>
<dbReference type="ProteomicsDB" id="224632"/>
<dbReference type="EnsemblPlants" id="AT4G08028.1">
    <property type="protein sequence ID" value="AT4G08028.1"/>
    <property type="gene ID" value="AT4G08028"/>
</dbReference>
<dbReference type="GeneID" id="3770043"/>
<dbReference type="Gramene" id="AT4G08028.1">
    <property type="protein sequence ID" value="AT4G08028.1"/>
    <property type="gene ID" value="AT4G08028"/>
</dbReference>
<dbReference type="KEGG" id="ath:AT4G08028"/>
<dbReference type="Araport" id="AT4G08028"/>
<dbReference type="TAIR" id="AT4G08028"/>
<dbReference type="HOGENOM" id="CLU_183259_0_0_1"/>
<dbReference type="InParanoid" id="Q2V3L0"/>
<dbReference type="OMA" id="VHCRTIT"/>
<dbReference type="OrthoDB" id="1081055at2759"/>
<dbReference type="PhylomeDB" id="Q2V3L0"/>
<dbReference type="PRO" id="PR:Q2V3L0"/>
<dbReference type="Proteomes" id="UP000006548">
    <property type="component" value="Chromosome 4"/>
</dbReference>
<dbReference type="ExpressionAtlas" id="Q2V3L0">
    <property type="expression patterns" value="baseline"/>
</dbReference>
<dbReference type="GO" id="GO:0005576">
    <property type="term" value="C:extracellular region"/>
    <property type="evidence" value="ECO:0007669"/>
    <property type="project" value="UniProtKB-SubCell"/>
</dbReference>
<dbReference type="GO" id="GO:0050832">
    <property type="term" value="P:defense response to fungus"/>
    <property type="evidence" value="ECO:0007669"/>
    <property type="project" value="UniProtKB-KW"/>
</dbReference>
<dbReference type="GO" id="GO:0031640">
    <property type="term" value="P:killing of cells of another organism"/>
    <property type="evidence" value="ECO:0007669"/>
    <property type="project" value="UniProtKB-KW"/>
</dbReference>